<evidence type="ECO:0000255" key="1">
    <source>
        <dbReference type="HAMAP-Rule" id="MF_00385"/>
    </source>
</evidence>
<evidence type="ECO:0000256" key="2">
    <source>
        <dbReference type="SAM" id="MobiDB-lite"/>
    </source>
</evidence>
<evidence type="ECO:0000305" key="3"/>
<proteinExistence type="inferred from homology"/>
<sequence>MALKIRLARAGSKKRPYYHVVVADVRAPRDGRFIETVGSWNPVLPKDAERVKLDAERIQHWIAQGAQPTDRVLRFLDQAGIAKRPSRNNPTKGEPGKKAQERLALAKQAEEEAAAKAAEAASE</sequence>
<dbReference type="EMBL" id="CP001488">
    <property type="protein sequence ID" value="ACO01546.1"/>
    <property type="molecule type" value="Genomic_DNA"/>
</dbReference>
<dbReference type="RefSeq" id="WP_004686277.1">
    <property type="nucleotide sequence ID" value="NC_012441.1"/>
</dbReference>
<dbReference type="SMR" id="C0RF74"/>
<dbReference type="KEGG" id="bmi:BMEA_A1874"/>
<dbReference type="HOGENOM" id="CLU_100590_3_1_5"/>
<dbReference type="Proteomes" id="UP000001748">
    <property type="component" value="Chromosome I"/>
</dbReference>
<dbReference type="GO" id="GO:0005737">
    <property type="term" value="C:cytoplasm"/>
    <property type="evidence" value="ECO:0007669"/>
    <property type="project" value="UniProtKB-ARBA"/>
</dbReference>
<dbReference type="GO" id="GO:0015935">
    <property type="term" value="C:small ribosomal subunit"/>
    <property type="evidence" value="ECO:0007669"/>
    <property type="project" value="TreeGrafter"/>
</dbReference>
<dbReference type="GO" id="GO:0003735">
    <property type="term" value="F:structural constituent of ribosome"/>
    <property type="evidence" value="ECO:0007669"/>
    <property type="project" value="InterPro"/>
</dbReference>
<dbReference type="GO" id="GO:0006412">
    <property type="term" value="P:translation"/>
    <property type="evidence" value="ECO:0007669"/>
    <property type="project" value="UniProtKB-UniRule"/>
</dbReference>
<dbReference type="Gene3D" id="3.30.1320.10">
    <property type="match status" value="1"/>
</dbReference>
<dbReference type="HAMAP" id="MF_00385">
    <property type="entry name" value="Ribosomal_bS16"/>
    <property type="match status" value="1"/>
</dbReference>
<dbReference type="InterPro" id="IPR000307">
    <property type="entry name" value="Ribosomal_bS16"/>
</dbReference>
<dbReference type="InterPro" id="IPR023803">
    <property type="entry name" value="Ribosomal_bS16_dom_sf"/>
</dbReference>
<dbReference type="NCBIfam" id="TIGR00002">
    <property type="entry name" value="S16"/>
    <property type="match status" value="1"/>
</dbReference>
<dbReference type="PANTHER" id="PTHR12919">
    <property type="entry name" value="30S RIBOSOMAL PROTEIN S16"/>
    <property type="match status" value="1"/>
</dbReference>
<dbReference type="PANTHER" id="PTHR12919:SF20">
    <property type="entry name" value="SMALL RIBOSOMAL SUBUNIT PROTEIN BS16M"/>
    <property type="match status" value="1"/>
</dbReference>
<dbReference type="Pfam" id="PF00886">
    <property type="entry name" value="Ribosomal_S16"/>
    <property type="match status" value="1"/>
</dbReference>
<dbReference type="SUPFAM" id="SSF54565">
    <property type="entry name" value="Ribosomal protein S16"/>
    <property type="match status" value="1"/>
</dbReference>
<feature type="chain" id="PRO_1000196349" description="Small ribosomal subunit protein bS16">
    <location>
        <begin position="1"/>
        <end position="123"/>
    </location>
</feature>
<feature type="region of interest" description="Disordered" evidence="2">
    <location>
        <begin position="79"/>
        <end position="123"/>
    </location>
</feature>
<comment type="similarity">
    <text evidence="1">Belongs to the bacterial ribosomal protein bS16 family.</text>
</comment>
<reference key="1">
    <citation type="submission" date="2009-03" db="EMBL/GenBank/DDBJ databases">
        <title>Brucella melitensis ATCC 23457 whole genome shotgun sequencing project.</title>
        <authorList>
            <person name="Setubal J.C."/>
            <person name="Boyle S."/>
            <person name="Crasta O.R."/>
            <person name="Gillespie J.J."/>
            <person name="Kenyon R.W."/>
            <person name="Lu J."/>
            <person name="Mane S."/>
            <person name="Nagrani S."/>
            <person name="Shallom J.M."/>
            <person name="Shallom S."/>
            <person name="Shukla M."/>
            <person name="Snyder E.E."/>
            <person name="Sobral B.W."/>
            <person name="Wattam A.R."/>
            <person name="Will R."/>
            <person name="Williams K."/>
            <person name="Yoo H."/>
            <person name="Munk C."/>
            <person name="Tapia R."/>
            <person name="Han C."/>
            <person name="Detter J.C."/>
            <person name="Bruce D."/>
            <person name="Brettin T.S."/>
        </authorList>
    </citation>
    <scope>NUCLEOTIDE SEQUENCE [LARGE SCALE GENOMIC DNA]</scope>
    <source>
        <strain>ATCC 23457</strain>
    </source>
</reference>
<name>RS16_BRUMB</name>
<accession>C0RF74</accession>
<protein>
    <recommendedName>
        <fullName evidence="1">Small ribosomal subunit protein bS16</fullName>
    </recommendedName>
    <alternativeName>
        <fullName evidence="3">30S ribosomal protein S16</fullName>
    </alternativeName>
</protein>
<gene>
    <name evidence="1" type="primary">rpsP</name>
    <name type="ordered locus">BMEA_A1874</name>
</gene>
<organism>
    <name type="scientific">Brucella melitensis biotype 2 (strain ATCC 23457)</name>
    <dbReference type="NCBI Taxonomy" id="546272"/>
    <lineage>
        <taxon>Bacteria</taxon>
        <taxon>Pseudomonadati</taxon>
        <taxon>Pseudomonadota</taxon>
        <taxon>Alphaproteobacteria</taxon>
        <taxon>Hyphomicrobiales</taxon>
        <taxon>Brucellaceae</taxon>
        <taxon>Brucella/Ochrobactrum group</taxon>
        <taxon>Brucella</taxon>
    </lineage>
</organism>
<keyword id="KW-0687">Ribonucleoprotein</keyword>
<keyword id="KW-0689">Ribosomal protein</keyword>